<comment type="function">
    <text evidence="1">Binds to 23S rRNA. Forms part of two intersubunit bridges in the 70S ribosome.</text>
</comment>
<comment type="subunit">
    <text evidence="1">Part of the 50S ribosomal subunit. Forms a cluster with proteins L3 and L19. In the 70S ribosome, L14 and L19 interact and together make contacts with the 16S rRNA in bridges B5 and B8.</text>
</comment>
<comment type="similarity">
    <text evidence="1">Belongs to the universal ribosomal protein uL14 family.</text>
</comment>
<feature type="chain" id="PRO_1000055657" description="Large ribosomal subunit protein uL14">
    <location>
        <begin position="1"/>
        <end position="122"/>
    </location>
</feature>
<keyword id="KW-1185">Reference proteome</keyword>
<keyword id="KW-0687">Ribonucleoprotein</keyword>
<keyword id="KW-0689">Ribosomal protein</keyword>
<keyword id="KW-0694">RNA-binding</keyword>
<keyword id="KW-0699">rRNA-binding</keyword>
<gene>
    <name evidence="1" type="primary">rplN</name>
    <name type="ordered locus">OEOE_0605</name>
</gene>
<protein>
    <recommendedName>
        <fullName evidence="1">Large ribosomal subunit protein uL14</fullName>
    </recommendedName>
    <alternativeName>
        <fullName evidence="2">50S ribosomal protein L14</fullName>
    </alternativeName>
</protein>
<name>RL14_OENOB</name>
<reference key="1">
    <citation type="journal article" date="2006" name="Proc. Natl. Acad. Sci. U.S.A.">
        <title>Comparative genomics of the lactic acid bacteria.</title>
        <authorList>
            <person name="Makarova K.S."/>
            <person name="Slesarev A."/>
            <person name="Wolf Y.I."/>
            <person name="Sorokin A."/>
            <person name="Mirkin B."/>
            <person name="Koonin E.V."/>
            <person name="Pavlov A."/>
            <person name="Pavlova N."/>
            <person name="Karamychev V."/>
            <person name="Polouchine N."/>
            <person name="Shakhova V."/>
            <person name="Grigoriev I."/>
            <person name="Lou Y."/>
            <person name="Rohksar D."/>
            <person name="Lucas S."/>
            <person name="Huang K."/>
            <person name="Goodstein D.M."/>
            <person name="Hawkins T."/>
            <person name="Plengvidhya V."/>
            <person name="Welker D."/>
            <person name="Hughes J."/>
            <person name="Goh Y."/>
            <person name="Benson A."/>
            <person name="Baldwin K."/>
            <person name="Lee J.-H."/>
            <person name="Diaz-Muniz I."/>
            <person name="Dosti B."/>
            <person name="Smeianov V."/>
            <person name="Wechter W."/>
            <person name="Barabote R."/>
            <person name="Lorca G."/>
            <person name="Altermann E."/>
            <person name="Barrangou R."/>
            <person name="Ganesan B."/>
            <person name="Xie Y."/>
            <person name="Rawsthorne H."/>
            <person name="Tamir D."/>
            <person name="Parker C."/>
            <person name="Breidt F."/>
            <person name="Broadbent J.R."/>
            <person name="Hutkins R."/>
            <person name="O'Sullivan D."/>
            <person name="Steele J."/>
            <person name="Unlu G."/>
            <person name="Saier M.H. Jr."/>
            <person name="Klaenhammer T."/>
            <person name="Richardson P."/>
            <person name="Kozyavkin S."/>
            <person name="Weimer B.C."/>
            <person name="Mills D.A."/>
        </authorList>
    </citation>
    <scope>NUCLEOTIDE SEQUENCE [LARGE SCALE GENOMIC DNA]</scope>
    <source>
        <strain>ATCC BAA-331 / PSU-1</strain>
    </source>
</reference>
<evidence type="ECO:0000255" key="1">
    <source>
        <dbReference type="HAMAP-Rule" id="MF_01367"/>
    </source>
</evidence>
<evidence type="ECO:0000305" key="2"/>
<dbReference type="EMBL" id="CP000411">
    <property type="protein sequence ID" value="ABJ56547.1"/>
    <property type="molecule type" value="Genomic_DNA"/>
</dbReference>
<dbReference type="RefSeq" id="WP_002818465.1">
    <property type="nucleotide sequence ID" value="NC_008528.1"/>
</dbReference>
<dbReference type="SMR" id="Q04G75"/>
<dbReference type="STRING" id="203123.OEOE_0605"/>
<dbReference type="GeneID" id="75065427"/>
<dbReference type="KEGG" id="ooe:OEOE_0605"/>
<dbReference type="eggNOG" id="COG0093">
    <property type="taxonomic scope" value="Bacteria"/>
</dbReference>
<dbReference type="HOGENOM" id="CLU_095071_2_1_9"/>
<dbReference type="Proteomes" id="UP000000774">
    <property type="component" value="Chromosome"/>
</dbReference>
<dbReference type="GO" id="GO:0022625">
    <property type="term" value="C:cytosolic large ribosomal subunit"/>
    <property type="evidence" value="ECO:0007669"/>
    <property type="project" value="TreeGrafter"/>
</dbReference>
<dbReference type="GO" id="GO:0070180">
    <property type="term" value="F:large ribosomal subunit rRNA binding"/>
    <property type="evidence" value="ECO:0007669"/>
    <property type="project" value="TreeGrafter"/>
</dbReference>
<dbReference type="GO" id="GO:0003735">
    <property type="term" value="F:structural constituent of ribosome"/>
    <property type="evidence" value="ECO:0007669"/>
    <property type="project" value="InterPro"/>
</dbReference>
<dbReference type="GO" id="GO:0006412">
    <property type="term" value="P:translation"/>
    <property type="evidence" value="ECO:0007669"/>
    <property type="project" value="UniProtKB-UniRule"/>
</dbReference>
<dbReference type="CDD" id="cd00337">
    <property type="entry name" value="Ribosomal_uL14"/>
    <property type="match status" value="1"/>
</dbReference>
<dbReference type="FunFam" id="2.40.150.20:FF:000001">
    <property type="entry name" value="50S ribosomal protein L14"/>
    <property type="match status" value="1"/>
</dbReference>
<dbReference type="Gene3D" id="2.40.150.20">
    <property type="entry name" value="Ribosomal protein L14"/>
    <property type="match status" value="1"/>
</dbReference>
<dbReference type="HAMAP" id="MF_01367">
    <property type="entry name" value="Ribosomal_uL14"/>
    <property type="match status" value="1"/>
</dbReference>
<dbReference type="InterPro" id="IPR000218">
    <property type="entry name" value="Ribosomal_uL14"/>
</dbReference>
<dbReference type="InterPro" id="IPR005745">
    <property type="entry name" value="Ribosomal_uL14_bac-type"/>
</dbReference>
<dbReference type="InterPro" id="IPR019972">
    <property type="entry name" value="Ribosomal_uL14_CS"/>
</dbReference>
<dbReference type="InterPro" id="IPR036853">
    <property type="entry name" value="Ribosomal_uL14_sf"/>
</dbReference>
<dbReference type="NCBIfam" id="TIGR01067">
    <property type="entry name" value="rplN_bact"/>
    <property type="match status" value="1"/>
</dbReference>
<dbReference type="PANTHER" id="PTHR11761">
    <property type="entry name" value="50S/60S RIBOSOMAL PROTEIN L14/L23"/>
    <property type="match status" value="1"/>
</dbReference>
<dbReference type="PANTHER" id="PTHR11761:SF3">
    <property type="entry name" value="LARGE RIBOSOMAL SUBUNIT PROTEIN UL14M"/>
    <property type="match status" value="1"/>
</dbReference>
<dbReference type="Pfam" id="PF00238">
    <property type="entry name" value="Ribosomal_L14"/>
    <property type="match status" value="1"/>
</dbReference>
<dbReference type="SMART" id="SM01374">
    <property type="entry name" value="Ribosomal_L14"/>
    <property type="match status" value="1"/>
</dbReference>
<dbReference type="SUPFAM" id="SSF50193">
    <property type="entry name" value="Ribosomal protein L14"/>
    <property type="match status" value="1"/>
</dbReference>
<dbReference type="PROSITE" id="PS00049">
    <property type="entry name" value="RIBOSOMAL_L14"/>
    <property type="match status" value="1"/>
</dbReference>
<organism>
    <name type="scientific">Oenococcus oeni (strain ATCC BAA-331 / PSU-1)</name>
    <dbReference type="NCBI Taxonomy" id="203123"/>
    <lineage>
        <taxon>Bacteria</taxon>
        <taxon>Bacillati</taxon>
        <taxon>Bacillota</taxon>
        <taxon>Bacilli</taxon>
        <taxon>Lactobacillales</taxon>
        <taxon>Lactobacillaceae</taxon>
        <taxon>Oenococcus</taxon>
    </lineage>
</organism>
<sequence>MIQQESRLKVADNSGAREILTIKVLGGSGRKFANIGDMIVATVKQAIPGGTVKKGDVVKAVIVRTVSGVHRIDGSYIKFDENAAVIVRDDKSPVGTRIFGPVARELRDNNYMRIVSLAPEVL</sequence>
<accession>Q04G75</accession>
<proteinExistence type="inferred from homology"/>